<feature type="chain" id="PRO_0000225173" description="Crossover junction endodeoxyribonuclease RuvC">
    <location>
        <begin position="1"/>
        <end position="157"/>
    </location>
</feature>
<feature type="active site" evidence="1">
    <location>
        <position position="7"/>
    </location>
</feature>
<feature type="active site" evidence="1">
    <location>
        <position position="67"/>
    </location>
</feature>
<feature type="active site" evidence="1">
    <location>
        <position position="140"/>
    </location>
</feature>
<feature type="binding site" evidence="1">
    <location>
        <position position="7"/>
    </location>
    <ligand>
        <name>Mg(2+)</name>
        <dbReference type="ChEBI" id="CHEBI:18420"/>
        <label>1</label>
    </ligand>
</feature>
<feature type="binding site" evidence="1">
    <location>
        <position position="67"/>
    </location>
    <ligand>
        <name>Mg(2+)</name>
        <dbReference type="ChEBI" id="CHEBI:18420"/>
        <label>2</label>
    </ligand>
</feature>
<feature type="binding site" evidence="1">
    <location>
        <position position="140"/>
    </location>
    <ligand>
        <name>Mg(2+)</name>
        <dbReference type="ChEBI" id="CHEBI:18420"/>
        <label>1</label>
    </ligand>
</feature>
<gene>
    <name evidence="1" type="primary">ruvC</name>
    <name type="ordered locus">RT0017</name>
</gene>
<proteinExistence type="inferred from homology"/>
<reference key="1">
    <citation type="journal article" date="2004" name="J. Bacteriol.">
        <title>Complete genome sequence of Rickettsia typhi and comparison with sequences of other Rickettsiae.</title>
        <authorList>
            <person name="McLeod M.P."/>
            <person name="Qin X."/>
            <person name="Karpathy S.E."/>
            <person name="Gioia J."/>
            <person name="Highlander S.K."/>
            <person name="Fox G.E."/>
            <person name="McNeill T.Z."/>
            <person name="Jiang H."/>
            <person name="Muzny D."/>
            <person name="Jacob L.S."/>
            <person name="Hawes A.C."/>
            <person name="Sodergren E."/>
            <person name="Gill R."/>
            <person name="Hume J."/>
            <person name="Morgan M."/>
            <person name="Fan G."/>
            <person name="Amin A.G."/>
            <person name="Gibbs R.A."/>
            <person name="Hong C."/>
            <person name="Yu X.-J."/>
            <person name="Walker D.H."/>
            <person name="Weinstock G.M."/>
        </authorList>
    </citation>
    <scope>NUCLEOTIDE SEQUENCE [LARGE SCALE GENOMIC DNA]</scope>
    <source>
        <strain>ATCC VR-144 / Wilmington</strain>
    </source>
</reference>
<organism>
    <name type="scientific">Rickettsia typhi (strain ATCC VR-144 / Wilmington)</name>
    <dbReference type="NCBI Taxonomy" id="257363"/>
    <lineage>
        <taxon>Bacteria</taxon>
        <taxon>Pseudomonadati</taxon>
        <taxon>Pseudomonadota</taxon>
        <taxon>Alphaproteobacteria</taxon>
        <taxon>Rickettsiales</taxon>
        <taxon>Rickettsiaceae</taxon>
        <taxon>Rickettsieae</taxon>
        <taxon>Rickettsia</taxon>
        <taxon>typhus group</taxon>
    </lineage>
</organism>
<keyword id="KW-0963">Cytoplasm</keyword>
<keyword id="KW-0227">DNA damage</keyword>
<keyword id="KW-0233">DNA recombination</keyword>
<keyword id="KW-0234">DNA repair</keyword>
<keyword id="KW-0238">DNA-binding</keyword>
<keyword id="KW-0255">Endonuclease</keyword>
<keyword id="KW-0378">Hydrolase</keyword>
<keyword id="KW-0460">Magnesium</keyword>
<keyword id="KW-0479">Metal-binding</keyword>
<keyword id="KW-0540">Nuclease</keyword>
<evidence type="ECO:0000255" key="1">
    <source>
        <dbReference type="HAMAP-Rule" id="MF_00034"/>
    </source>
</evidence>
<dbReference type="EC" id="3.1.21.10" evidence="1"/>
<dbReference type="EMBL" id="AE017197">
    <property type="protein sequence ID" value="AAU03505.1"/>
    <property type="molecule type" value="Genomic_DNA"/>
</dbReference>
<dbReference type="RefSeq" id="WP_011190492.1">
    <property type="nucleotide sequence ID" value="NC_006142.1"/>
</dbReference>
<dbReference type="SMR" id="Q68XY7"/>
<dbReference type="KEGG" id="rty:RT0017"/>
<dbReference type="eggNOG" id="COG0817">
    <property type="taxonomic scope" value="Bacteria"/>
</dbReference>
<dbReference type="HOGENOM" id="CLU_091257_1_0_5"/>
<dbReference type="OrthoDB" id="9805499at2"/>
<dbReference type="Proteomes" id="UP000000604">
    <property type="component" value="Chromosome"/>
</dbReference>
<dbReference type="GO" id="GO:0005737">
    <property type="term" value="C:cytoplasm"/>
    <property type="evidence" value="ECO:0007669"/>
    <property type="project" value="UniProtKB-SubCell"/>
</dbReference>
<dbReference type="GO" id="GO:0048476">
    <property type="term" value="C:Holliday junction resolvase complex"/>
    <property type="evidence" value="ECO:0007669"/>
    <property type="project" value="UniProtKB-UniRule"/>
</dbReference>
<dbReference type="GO" id="GO:0008821">
    <property type="term" value="F:crossover junction DNA endonuclease activity"/>
    <property type="evidence" value="ECO:0007669"/>
    <property type="project" value="UniProtKB-UniRule"/>
</dbReference>
<dbReference type="GO" id="GO:0003677">
    <property type="term" value="F:DNA binding"/>
    <property type="evidence" value="ECO:0007669"/>
    <property type="project" value="UniProtKB-KW"/>
</dbReference>
<dbReference type="GO" id="GO:0000287">
    <property type="term" value="F:magnesium ion binding"/>
    <property type="evidence" value="ECO:0007669"/>
    <property type="project" value="UniProtKB-UniRule"/>
</dbReference>
<dbReference type="GO" id="GO:0006310">
    <property type="term" value="P:DNA recombination"/>
    <property type="evidence" value="ECO:0007669"/>
    <property type="project" value="UniProtKB-UniRule"/>
</dbReference>
<dbReference type="GO" id="GO:0006281">
    <property type="term" value="P:DNA repair"/>
    <property type="evidence" value="ECO:0007669"/>
    <property type="project" value="UniProtKB-UniRule"/>
</dbReference>
<dbReference type="CDD" id="cd16962">
    <property type="entry name" value="RuvC"/>
    <property type="match status" value="1"/>
</dbReference>
<dbReference type="FunFam" id="3.30.420.10:FF:000002">
    <property type="entry name" value="Crossover junction endodeoxyribonuclease RuvC"/>
    <property type="match status" value="1"/>
</dbReference>
<dbReference type="Gene3D" id="3.30.420.10">
    <property type="entry name" value="Ribonuclease H-like superfamily/Ribonuclease H"/>
    <property type="match status" value="1"/>
</dbReference>
<dbReference type="HAMAP" id="MF_00034">
    <property type="entry name" value="RuvC"/>
    <property type="match status" value="1"/>
</dbReference>
<dbReference type="InterPro" id="IPR012337">
    <property type="entry name" value="RNaseH-like_sf"/>
</dbReference>
<dbReference type="InterPro" id="IPR036397">
    <property type="entry name" value="RNaseH_sf"/>
</dbReference>
<dbReference type="InterPro" id="IPR020563">
    <property type="entry name" value="X-over_junc_endoDNase_Mg_BS"/>
</dbReference>
<dbReference type="InterPro" id="IPR002176">
    <property type="entry name" value="X-over_junc_endoDNase_RuvC"/>
</dbReference>
<dbReference type="NCBIfam" id="TIGR00228">
    <property type="entry name" value="ruvC"/>
    <property type="match status" value="1"/>
</dbReference>
<dbReference type="PANTHER" id="PTHR30194">
    <property type="entry name" value="CROSSOVER JUNCTION ENDODEOXYRIBONUCLEASE RUVC"/>
    <property type="match status" value="1"/>
</dbReference>
<dbReference type="PANTHER" id="PTHR30194:SF3">
    <property type="entry name" value="CROSSOVER JUNCTION ENDODEOXYRIBONUCLEASE RUVC"/>
    <property type="match status" value="1"/>
</dbReference>
<dbReference type="Pfam" id="PF02075">
    <property type="entry name" value="RuvC"/>
    <property type="match status" value="1"/>
</dbReference>
<dbReference type="PRINTS" id="PR00696">
    <property type="entry name" value="RSOLVASERUVC"/>
</dbReference>
<dbReference type="SUPFAM" id="SSF53098">
    <property type="entry name" value="Ribonuclease H-like"/>
    <property type="match status" value="1"/>
</dbReference>
<dbReference type="PROSITE" id="PS01321">
    <property type="entry name" value="RUVC"/>
    <property type="match status" value="1"/>
</dbReference>
<comment type="function">
    <text evidence="1">The RuvA-RuvB-RuvC complex processes Holliday junction (HJ) DNA during genetic recombination and DNA repair. Endonuclease that resolves HJ intermediates. Cleaves cruciform DNA by making single-stranded nicks across the HJ at symmetrical positions within the homologous arms, yielding a 5'-phosphate and a 3'-hydroxyl group; requires a central core of homology in the junction. The consensus cleavage sequence is 5'-(A/T)TT(C/G)-3'. Cleavage occurs on the 3'-side of the TT dinucleotide at the point of strand exchange. HJ branch migration catalyzed by RuvA-RuvB allows RuvC to scan DNA until it finds its consensus sequence, where it cleaves and resolves the cruciform DNA.</text>
</comment>
<comment type="catalytic activity">
    <reaction evidence="1">
        <text>Endonucleolytic cleavage at a junction such as a reciprocal single-stranded crossover between two homologous DNA duplexes (Holliday junction).</text>
        <dbReference type="EC" id="3.1.21.10"/>
    </reaction>
</comment>
<comment type="cofactor">
    <cofactor evidence="1">
        <name>Mg(2+)</name>
        <dbReference type="ChEBI" id="CHEBI:18420"/>
    </cofactor>
    <text evidence="1">Binds 2 Mg(2+) ion per subunit.</text>
</comment>
<comment type="subunit">
    <text evidence="1">Homodimer which binds Holliday junction (HJ) DNA. The HJ becomes 2-fold symmetrical on binding to RuvC with unstacked arms; it has a different conformation from HJ DNA in complex with RuvA. In the full resolvosome a probable DNA-RuvA(4)-RuvB(12)-RuvC(2) complex forms which resolves the HJ.</text>
</comment>
<comment type="subcellular location">
    <subcellularLocation>
        <location evidence="1">Cytoplasm</location>
    </subcellularLocation>
</comment>
<comment type="similarity">
    <text evidence="1">Belongs to the RuvC family.</text>
</comment>
<accession>Q68XY7</accession>
<protein>
    <recommendedName>
        <fullName evidence="1">Crossover junction endodeoxyribonuclease RuvC</fullName>
        <ecNumber evidence="1">3.1.21.10</ecNumber>
    </recommendedName>
    <alternativeName>
        <fullName evidence="1">Holliday junction nuclease RuvC</fullName>
    </alternativeName>
    <alternativeName>
        <fullName evidence="1">Holliday junction resolvase RuvC</fullName>
    </alternativeName>
</protein>
<sequence length="157" mass="17434">MIVLGIDPALGNLGWALVAKEYTKLKYLASGTIKTHSKDEIHNRLAFINSTLEKVILKYQPNIAAIEETFINTNSVTSLKLGYARGAIMSLIGRYNLNMQEFKPNTVKKTVTGYGHAKKEQILYMIKHLIPGTDLITNSDEADAVALAYTSLVTKKY</sequence>
<name>RUVC_RICTY</name>